<gene>
    <name type="ordered locus">At4g32285</name>
    <name type="ORF">F10M6.80</name>
</gene>
<keyword id="KW-0168">Coated pit</keyword>
<keyword id="KW-0968">Cytoplasmic vesicle</keyword>
<keyword id="KW-0254">Endocytosis</keyword>
<keyword id="KW-0333">Golgi apparatus</keyword>
<keyword id="KW-0472">Membrane</keyword>
<keyword id="KW-0597">Phosphoprotein</keyword>
<keyword id="KW-1185">Reference proteome</keyword>
<protein>
    <recommendedName>
        <fullName>Probable clathrin assembly protein At4g32285</fullName>
    </recommendedName>
</protein>
<feature type="chain" id="PRO_0000187067" description="Probable clathrin assembly protein At4g32285">
    <location>
        <begin position="1"/>
        <end position="635"/>
    </location>
</feature>
<feature type="domain" description="ENTH" evidence="3">
    <location>
        <begin position="23"/>
        <end position="159"/>
    </location>
</feature>
<feature type="region of interest" description="Disordered" evidence="4">
    <location>
        <begin position="157"/>
        <end position="208"/>
    </location>
</feature>
<feature type="region of interest" description="Disordered" evidence="4">
    <location>
        <begin position="357"/>
        <end position="412"/>
    </location>
</feature>
<feature type="compositionally biased region" description="Low complexity" evidence="4">
    <location>
        <begin position="165"/>
        <end position="174"/>
    </location>
</feature>
<feature type="compositionally biased region" description="Basic and acidic residues" evidence="4">
    <location>
        <begin position="175"/>
        <end position="184"/>
    </location>
</feature>
<feature type="compositionally biased region" description="Basic and acidic residues" evidence="4">
    <location>
        <begin position="357"/>
        <end position="369"/>
    </location>
</feature>
<feature type="compositionally biased region" description="Pro residues" evidence="4">
    <location>
        <begin position="390"/>
        <end position="409"/>
    </location>
</feature>
<feature type="modified residue" description="Phosphoserine" evidence="6 7 8 9">
    <location>
        <position position="207"/>
    </location>
</feature>
<feature type="modified residue" description="Phosphothreonine" evidence="2">
    <location>
        <position position="224"/>
    </location>
</feature>
<feature type="sequence conflict" description="In Ref. 3; AAL77661." evidence="5" ref="3">
    <original>A</original>
    <variation>V</variation>
    <location>
        <position position="467"/>
    </location>
</feature>
<dbReference type="EMBL" id="AL021811">
    <property type="protein sequence ID" value="CAA16962.1"/>
    <property type="status" value="ALT_SEQ"/>
    <property type="molecule type" value="Genomic_DNA"/>
</dbReference>
<dbReference type="EMBL" id="AL161580">
    <property type="protein sequence ID" value="CAB79946.1"/>
    <property type="status" value="ALT_SEQ"/>
    <property type="molecule type" value="Genomic_DNA"/>
</dbReference>
<dbReference type="EMBL" id="CP002687">
    <property type="protein sequence ID" value="AEE86033.1"/>
    <property type="molecule type" value="Genomic_DNA"/>
</dbReference>
<dbReference type="EMBL" id="CP002687">
    <property type="protein sequence ID" value="AEE86034.1"/>
    <property type="molecule type" value="Genomic_DNA"/>
</dbReference>
<dbReference type="EMBL" id="AY075654">
    <property type="protein sequence ID" value="AAL77661.1"/>
    <property type="molecule type" value="mRNA"/>
</dbReference>
<dbReference type="EMBL" id="BT022005">
    <property type="protein sequence ID" value="AAY25417.1"/>
    <property type="molecule type" value="mRNA"/>
</dbReference>
<dbReference type="EMBL" id="AK317226">
    <property type="protein sequence ID" value="BAH19907.1"/>
    <property type="molecule type" value="mRNA"/>
</dbReference>
<dbReference type="PIR" id="T48002">
    <property type="entry name" value="T48002"/>
</dbReference>
<dbReference type="RefSeq" id="NP_001031770.1">
    <property type="nucleotide sequence ID" value="NM_001036693.2"/>
</dbReference>
<dbReference type="RefSeq" id="NP_567892.1">
    <property type="nucleotide sequence ID" value="NM_119381.3"/>
</dbReference>
<dbReference type="SMR" id="Q8S9J8"/>
<dbReference type="BioGRID" id="14648">
    <property type="interactions" value="2"/>
</dbReference>
<dbReference type="FunCoup" id="Q8S9J8">
    <property type="interactions" value="3354"/>
</dbReference>
<dbReference type="STRING" id="3702.Q8S9J8"/>
<dbReference type="iPTMnet" id="Q8S9J8"/>
<dbReference type="PaxDb" id="3702-AT4G32285.2"/>
<dbReference type="ProteomicsDB" id="239125"/>
<dbReference type="EnsemblPlants" id="AT4G32285.1">
    <property type="protein sequence ID" value="AT4G32285.1"/>
    <property type="gene ID" value="AT4G32285"/>
</dbReference>
<dbReference type="EnsemblPlants" id="AT4G32285.2">
    <property type="protein sequence ID" value="AT4G32285.2"/>
    <property type="gene ID" value="AT4G32285"/>
</dbReference>
<dbReference type="GeneID" id="829362"/>
<dbReference type="Gramene" id="AT4G32285.1">
    <property type="protein sequence ID" value="AT4G32285.1"/>
    <property type="gene ID" value="AT4G32285"/>
</dbReference>
<dbReference type="Gramene" id="AT4G32285.2">
    <property type="protein sequence ID" value="AT4G32285.2"/>
    <property type="gene ID" value="AT4G32285"/>
</dbReference>
<dbReference type="KEGG" id="ath:AT4G32285"/>
<dbReference type="Araport" id="AT4G32285"/>
<dbReference type="TAIR" id="AT4G32285">
    <property type="gene designation" value="CAP1"/>
</dbReference>
<dbReference type="eggNOG" id="KOG0251">
    <property type="taxonomic scope" value="Eukaryota"/>
</dbReference>
<dbReference type="HOGENOM" id="CLU_014098_3_0_1"/>
<dbReference type="InParanoid" id="Q8S9J8"/>
<dbReference type="OMA" id="YGMRKSR"/>
<dbReference type="OrthoDB" id="44015at2759"/>
<dbReference type="PhylomeDB" id="Q8S9J8"/>
<dbReference type="PRO" id="PR:Q8S9J8"/>
<dbReference type="Proteomes" id="UP000006548">
    <property type="component" value="Chromosome 4"/>
</dbReference>
<dbReference type="ExpressionAtlas" id="Q8S9J8">
    <property type="expression patterns" value="baseline and differential"/>
</dbReference>
<dbReference type="GO" id="GO:0009504">
    <property type="term" value="C:cell plate"/>
    <property type="evidence" value="ECO:0000314"/>
    <property type="project" value="TAIR"/>
</dbReference>
<dbReference type="GO" id="GO:0005905">
    <property type="term" value="C:clathrin-coated pit"/>
    <property type="evidence" value="ECO:0007669"/>
    <property type="project" value="UniProtKB-SubCell"/>
</dbReference>
<dbReference type="GO" id="GO:0030136">
    <property type="term" value="C:clathrin-coated vesicle"/>
    <property type="evidence" value="ECO:0007669"/>
    <property type="project" value="UniProtKB-SubCell"/>
</dbReference>
<dbReference type="GO" id="GO:0005829">
    <property type="term" value="C:cytosol"/>
    <property type="evidence" value="ECO:0000314"/>
    <property type="project" value="TAIR"/>
</dbReference>
<dbReference type="GO" id="GO:0005794">
    <property type="term" value="C:Golgi apparatus"/>
    <property type="evidence" value="ECO:0007669"/>
    <property type="project" value="UniProtKB-SubCell"/>
</dbReference>
<dbReference type="GO" id="GO:0005634">
    <property type="term" value="C:nucleus"/>
    <property type="evidence" value="ECO:0000314"/>
    <property type="project" value="TAIR"/>
</dbReference>
<dbReference type="GO" id="GO:0005886">
    <property type="term" value="C:plasma membrane"/>
    <property type="evidence" value="ECO:0000314"/>
    <property type="project" value="TAIR"/>
</dbReference>
<dbReference type="GO" id="GO:0005545">
    <property type="term" value="F:1-phosphatidylinositol binding"/>
    <property type="evidence" value="ECO:0007669"/>
    <property type="project" value="InterPro"/>
</dbReference>
<dbReference type="GO" id="GO:0030276">
    <property type="term" value="F:clathrin binding"/>
    <property type="evidence" value="ECO:0007669"/>
    <property type="project" value="InterPro"/>
</dbReference>
<dbReference type="GO" id="GO:0048268">
    <property type="term" value="P:clathrin coat assembly"/>
    <property type="evidence" value="ECO:0007669"/>
    <property type="project" value="InterPro"/>
</dbReference>
<dbReference type="GO" id="GO:0072583">
    <property type="term" value="P:clathrin-dependent endocytosis"/>
    <property type="evidence" value="ECO:0000353"/>
    <property type="project" value="TAIR"/>
</dbReference>
<dbReference type="CDD" id="cd16987">
    <property type="entry name" value="ANTH_N_AP180_plant"/>
    <property type="match status" value="1"/>
</dbReference>
<dbReference type="FunFam" id="1.25.40.90:FF:000019">
    <property type="entry name" value="Clathrin coat assembly protein"/>
    <property type="match status" value="1"/>
</dbReference>
<dbReference type="FunFam" id="1.20.58.150:FF:000005">
    <property type="entry name" value="putative clathrin assembly protein At2g25430"/>
    <property type="match status" value="1"/>
</dbReference>
<dbReference type="Gene3D" id="1.25.40.90">
    <property type="match status" value="1"/>
</dbReference>
<dbReference type="Gene3D" id="1.20.58.150">
    <property type="entry name" value="ANTH domain"/>
    <property type="match status" value="1"/>
</dbReference>
<dbReference type="InterPro" id="IPR011417">
    <property type="entry name" value="ANTH_dom"/>
</dbReference>
<dbReference type="InterPro" id="IPR014712">
    <property type="entry name" value="ANTH_dom_sf"/>
</dbReference>
<dbReference type="InterPro" id="IPR048050">
    <property type="entry name" value="ANTH_N_plant"/>
</dbReference>
<dbReference type="InterPro" id="IPR045192">
    <property type="entry name" value="AP180-like"/>
</dbReference>
<dbReference type="InterPro" id="IPR013809">
    <property type="entry name" value="ENTH"/>
</dbReference>
<dbReference type="InterPro" id="IPR008942">
    <property type="entry name" value="ENTH_VHS"/>
</dbReference>
<dbReference type="PANTHER" id="PTHR22951">
    <property type="entry name" value="CLATHRIN ASSEMBLY PROTEIN"/>
    <property type="match status" value="1"/>
</dbReference>
<dbReference type="PANTHER" id="PTHR22951:SF84">
    <property type="entry name" value="ENTH DOMAIN-CONTAINING PROTEIN"/>
    <property type="match status" value="1"/>
</dbReference>
<dbReference type="Pfam" id="PF07651">
    <property type="entry name" value="ANTH"/>
    <property type="match status" value="1"/>
</dbReference>
<dbReference type="SMART" id="SM00273">
    <property type="entry name" value="ENTH"/>
    <property type="match status" value="1"/>
</dbReference>
<dbReference type="SUPFAM" id="SSF48464">
    <property type="entry name" value="ENTH/VHS domain"/>
    <property type="match status" value="1"/>
</dbReference>
<dbReference type="SUPFAM" id="SSF89009">
    <property type="entry name" value="GAT-like domain"/>
    <property type="match status" value="1"/>
</dbReference>
<dbReference type="PROSITE" id="PS50942">
    <property type="entry name" value="ENTH"/>
    <property type="match status" value="1"/>
</dbReference>
<accession>Q8S9J8</accession>
<accession>O49363</accession>
<accession>Q501G2</accession>
<organism>
    <name type="scientific">Arabidopsis thaliana</name>
    <name type="common">Mouse-ear cress</name>
    <dbReference type="NCBI Taxonomy" id="3702"/>
    <lineage>
        <taxon>Eukaryota</taxon>
        <taxon>Viridiplantae</taxon>
        <taxon>Streptophyta</taxon>
        <taxon>Embryophyta</taxon>
        <taxon>Tracheophyta</taxon>
        <taxon>Spermatophyta</taxon>
        <taxon>Magnoliopsida</taxon>
        <taxon>eudicotyledons</taxon>
        <taxon>Gunneridae</taxon>
        <taxon>Pentapetalae</taxon>
        <taxon>rosids</taxon>
        <taxon>malvids</taxon>
        <taxon>Brassicales</taxon>
        <taxon>Brassicaceae</taxon>
        <taxon>Camelineae</taxon>
        <taxon>Arabidopsis</taxon>
    </lineage>
</organism>
<comment type="subcellular location">
    <subcellularLocation>
        <location evidence="1">Membrane</location>
        <location evidence="1">Clathrin-coated pit</location>
    </subcellularLocation>
    <subcellularLocation>
        <location evidence="1">Golgi apparatus</location>
    </subcellularLocation>
    <subcellularLocation>
        <location evidence="1">Cytoplasmic vesicle</location>
        <location evidence="1">Clathrin-coated vesicle</location>
    </subcellularLocation>
    <text evidence="1">Colocalized with clathrin in the Golgi area.</text>
</comment>
<comment type="sequence caution" evidence="5">
    <conflict type="erroneous gene model prediction">
        <sequence resource="EMBL-CDS" id="CAA16962"/>
    </conflict>
    <text>The predicted gene At4g32280 has been split into 2 genes: At4g32280 and At4g32285.</text>
</comment>
<comment type="sequence caution" evidence="5">
    <conflict type="erroneous gene model prediction">
        <sequence resource="EMBL-CDS" id="CAB79946"/>
    </conflict>
    <text>The predicted gene At4g32280 has been split into 2 genes: At4g32280 and At4g32285.</text>
</comment>
<proteinExistence type="evidence at protein level"/>
<name>CAP1_ARATH</name>
<reference key="1">
    <citation type="journal article" date="1999" name="Nature">
        <title>Sequence and analysis of chromosome 4 of the plant Arabidopsis thaliana.</title>
        <authorList>
            <person name="Mayer K.F.X."/>
            <person name="Schueller C."/>
            <person name="Wambutt R."/>
            <person name="Murphy G."/>
            <person name="Volckaert G."/>
            <person name="Pohl T."/>
            <person name="Duesterhoeft A."/>
            <person name="Stiekema W."/>
            <person name="Entian K.-D."/>
            <person name="Terryn N."/>
            <person name="Harris B."/>
            <person name="Ansorge W."/>
            <person name="Brandt P."/>
            <person name="Grivell L.A."/>
            <person name="Rieger M."/>
            <person name="Weichselgartner M."/>
            <person name="de Simone V."/>
            <person name="Obermaier B."/>
            <person name="Mache R."/>
            <person name="Mueller M."/>
            <person name="Kreis M."/>
            <person name="Delseny M."/>
            <person name="Puigdomenech P."/>
            <person name="Watson M."/>
            <person name="Schmidtheini T."/>
            <person name="Reichert B."/>
            <person name="Portetelle D."/>
            <person name="Perez-Alonso M."/>
            <person name="Boutry M."/>
            <person name="Bancroft I."/>
            <person name="Vos P."/>
            <person name="Hoheisel J."/>
            <person name="Zimmermann W."/>
            <person name="Wedler H."/>
            <person name="Ridley P."/>
            <person name="Langham S.-A."/>
            <person name="McCullagh B."/>
            <person name="Bilham L."/>
            <person name="Robben J."/>
            <person name="van der Schueren J."/>
            <person name="Grymonprez B."/>
            <person name="Chuang Y.-J."/>
            <person name="Vandenbussche F."/>
            <person name="Braeken M."/>
            <person name="Weltjens I."/>
            <person name="Voet M."/>
            <person name="Bastiaens I."/>
            <person name="Aert R."/>
            <person name="Defoor E."/>
            <person name="Weitzenegger T."/>
            <person name="Bothe G."/>
            <person name="Ramsperger U."/>
            <person name="Hilbert H."/>
            <person name="Braun M."/>
            <person name="Holzer E."/>
            <person name="Brandt A."/>
            <person name="Peters S."/>
            <person name="van Staveren M."/>
            <person name="Dirkse W."/>
            <person name="Mooijman P."/>
            <person name="Klein Lankhorst R."/>
            <person name="Rose M."/>
            <person name="Hauf J."/>
            <person name="Koetter P."/>
            <person name="Berneiser S."/>
            <person name="Hempel S."/>
            <person name="Feldpausch M."/>
            <person name="Lamberth S."/>
            <person name="Van den Daele H."/>
            <person name="De Keyser A."/>
            <person name="Buysshaert C."/>
            <person name="Gielen J."/>
            <person name="Villarroel R."/>
            <person name="De Clercq R."/>
            <person name="van Montagu M."/>
            <person name="Rogers J."/>
            <person name="Cronin A."/>
            <person name="Quail M.A."/>
            <person name="Bray-Allen S."/>
            <person name="Clark L."/>
            <person name="Doggett J."/>
            <person name="Hall S."/>
            <person name="Kay M."/>
            <person name="Lennard N."/>
            <person name="McLay K."/>
            <person name="Mayes R."/>
            <person name="Pettett A."/>
            <person name="Rajandream M.A."/>
            <person name="Lyne M."/>
            <person name="Benes V."/>
            <person name="Rechmann S."/>
            <person name="Borkova D."/>
            <person name="Bloecker H."/>
            <person name="Scharfe M."/>
            <person name="Grimm M."/>
            <person name="Loehnert T.-H."/>
            <person name="Dose S."/>
            <person name="de Haan M."/>
            <person name="Maarse A.C."/>
            <person name="Schaefer M."/>
            <person name="Mueller-Auer S."/>
            <person name="Gabel C."/>
            <person name="Fuchs M."/>
            <person name="Fartmann B."/>
            <person name="Granderath K."/>
            <person name="Dauner D."/>
            <person name="Herzl A."/>
            <person name="Neumann S."/>
            <person name="Argiriou A."/>
            <person name="Vitale D."/>
            <person name="Liguori R."/>
            <person name="Piravandi E."/>
            <person name="Massenet O."/>
            <person name="Quigley F."/>
            <person name="Clabauld G."/>
            <person name="Muendlein A."/>
            <person name="Felber R."/>
            <person name="Schnabl S."/>
            <person name="Hiller R."/>
            <person name="Schmidt W."/>
            <person name="Lecharny A."/>
            <person name="Aubourg S."/>
            <person name="Chefdor F."/>
            <person name="Cooke R."/>
            <person name="Berger C."/>
            <person name="Monfort A."/>
            <person name="Casacuberta E."/>
            <person name="Gibbons T."/>
            <person name="Weber N."/>
            <person name="Vandenbol M."/>
            <person name="Bargues M."/>
            <person name="Terol J."/>
            <person name="Torres A."/>
            <person name="Perez-Perez A."/>
            <person name="Purnelle B."/>
            <person name="Bent E."/>
            <person name="Johnson S."/>
            <person name="Tacon D."/>
            <person name="Jesse T."/>
            <person name="Heijnen L."/>
            <person name="Schwarz S."/>
            <person name="Scholler P."/>
            <person name="Heber S."/>
            <person name="Francs P."/>
            <person name="Bielke C."/>
            <person name="Frishman D."/>
            <person name="Haase D."/>
            <person name="Lemcke K."/>
            <person name="Mewes H.-W."/>
            <person name="Stocker S."/>
            <person name="Zaccaria P."/>
            <person name="Bevan M."/>
            <person name="Wilson R.K."/>
            <person name="de la Bastide M."/>
            <person name="Habermann K."/>
            <person name="Parnell L."/>
            <person name="Dedhia N."/>
            <person name="Gnoj L."/>
            <person name="Schutz K."/>
            <person name="Huang E."/>
            <person name="Spiegel L."/>
            <person name="Sekhon M."/>
            <person name="Murray J."/>
            <person name="Sheet P."/>
            <person name="Cordes M."/>
            <person name="Abu-Threideh J."/>
            <person name="Stoneking T."/>
            <person name="Kalicki J."/>
            <person name="Graves T."/>
            <person name="Harmon G."/>
            <person name="Edwards J."/>
            <person name="Latreille P."/>
            <person name="Courtney L."/>
            <person name="Cloud J."/>
            <person name="Abbott A."/>
            <person name="Scott K."/>
            <person name="Johnson D."/>
            <person name="Minx P."/>
            <person name="Bentley D."/>
            <person name="Fulton B."/>
            <person name="Miller N."/>
            <person name="Greco T."/>
            <person name="Kemp K."/>
            <person name="Kramer J."/>
            <person name="Fulton L."/>
            <person name="Mardis E."/>
            <person name="Dante M."/>
            <person name="Pepin K."/>
            <person name="Hillier L.W."/>
            <person name="Nelson J."/>
            <person name="Spieth J."/>
            <person name="Ryan E."/>
            <person name="Andrews S."/>
            <person name="Geisel C."/>
            <person name="Layman D."/>
            <person name="Du H."/>
            <person name="Ali J."/>
            <person name="Berghoff A."/>
            <person name="Jones K."/>
            <person name="Drone K."/>
            <person name="Cotton M."/>
            <person name="Joshu C."/>
            <person name="Antonoiu B."/>
            <person name="Zidanic M."/>
            <person name="Strong C."/>
            <person name="Sun H."/>
            <person name="Lamar B."/>
            <person name="Yordan C."/>
            <person name="Ma P."/>
            <person name="Zhong J."/>
            <person name="Preston R."/>
            <person name="Vil D."/>
            <person name="Shekher M."/>
            <person name="Matero A."/>
            <person name="Shah R."/>
            <person name="Swaby I.K."/>
            <person name="O'Shaughnessy A."/>
            <person name="Rodriguez M."/>
            <person name="Hoffman J."/>
            <person name="Till S."/>
            <person name="Granat S."/>
            <person name="Shohdy N."/>
            <person name="Hasegawa A."/>
            <person name="Hameed A."/>
            <person name="Lodhi M."/>
            <person name="Johnson A."/>
            <person name="Chen E."/>
            <person name="Marra M.A."/>
            <person name="Martienssen R."/>
            <person name="McCombie W.R."/>
        </authorList>
    </citation>
    <scope>NUCLEOTIDE SEQUENCE [LARGE SCALE GENOMIC DNA]</scope>
    <source>
        <strain>cv. Columbia</strain>
    </source>
</reference>
<reference key="2">
    <citation type="journal article" date="2017" name="Plant J.">
        <title>Araport11: a complete reannotation of the Arabidopsis thaliana reference genome.</title>
        <authorList>
            <person name="Cheng C.Y."/>
            <person name="Krishnakumar V."/>
            <person name="Chan A.P."/>
            <person name="Thibaud-Nissen F."/>
            <person name="Schobel S."/>
            <person name="Town C.D."/>
        </authorList>
    </citation>
    <scope>GENOME REANNOTATION</scope>
    <source>
        <strain>cv. Columbia</strain>
    </source>
</reference>
<reference key="3">
    <citation type="journal article" date="2003" name="Science">
        <title>Empirical analysis of transcriptional activity in the Arabidopsis genome.</title>
        <authorList>
            <person name="Yamada K."/>
            <person name="Lim J."/>
            <person name="Dale J.M."/>
            <person name="Chen H."/>
            <person name="Shinn P."/>
            <person name="Palm C.J."/>
            <person name="Southwick A.M."/>
            <person name="Wu H.C."/>
            <person name="Kim C.J."/>
            <person name="Nguyen M."/>
            <person name="Pham P.K."/>
            <person name="Cheuk R.F."/>
            <person name="Karlin-Newmann G."/>
            <person name="Liu S.X."/>
            <person name="Lam B."/>
            <person name="Sakano H."/>
            <person name="Wu T."/>
            <person name="Yu G."/>
            <person name="Miranda M."/>
            <person name="Quach H.L."/>
            <person name="Tripp M."/>
            <person name="Chang C.H."/>
            <person name="Lee J.M."/>
            <person name="Toriumi M.J."/>
            <person name="Chan M.M."/>
            <person name="Tang C.C."/>
            <person name="Onodera C.S."/>
            <person name="Deng J.M."/>
            <person name="Akiyama K."/>
            <person name="Ansari Y."/>
            <person name="Arakawa T."/>
            <person name="Banh J."/>
            <person name="Banno F."/>
            <person name="Bowser L."/>
            <person name="Brooks S.Y."/>
            <person name="Carninci P."/>
            <person name="Chao Q."/>
            <person name="Choy N."/>
            <person name="Enju A."/>
            <person name="Goldsmith A.D."/>
            <person name="Gurjal M."/>
            <person name="Hansen N.F."/>
            <person name="Hayashizaki Y."/>
            <person name="Johnson-Hopson C."/>
            <person name="Hsuan V.W."/>
            <person name="Iida K."/>
            <person name="Karnes M."/>
            <person name="Khan S."/>
            <person name="Koesema E."/>
            <person name="Ishida J."/>
            <person name="Jiang P.X."/>
            <person name="Jones T."/>
            <person name="Kawai J."/>
            <person name="Kamiya A."/>
            <person name="Meyers C."/>
            <person name="Nakajima M."/>
            <person name="Narusaka M."/>
            <person name="Seki M."/>
            <person name="Sakurai T."/>
            <person name="Satou M."/>
            <person name="Tamse R."/>
            <person name="Vaysberg M."/>
            <person name="Wallender E.K."/>
            <person name="Wong C."/>
            <person name="Yamamura Y."/>
            <person name="Yuan S."/>
            <person name="Shinozaki K."/>
            <person name="Davis R.W."/>
            <person name="Theologis A."/>
            <person name="Ecker J.R."/>
        </authorList>
    </citation>
    <scope>NUCLEOTIDE SEQUENCE [LARGE SCALE MRNA]</scope>
    <source>
        <strain>cv. Columbia</strain>
    </source>
</reference>
<reference key="4">
    <citation type="submission" date="2005-05" db="EMBL/GenBank/DDBJ databases">
        <title>Arabidopsis ORF clones.</title>
        <authorList>
            <person name="Cheuk R.F."/>
            <person name="Chen H."/>
            <person name="Kim C.J."/>
            <person name="Shinn P."/>
            <person name="Ecker J.R."/>
        </authorList>
    </citation>
    <scope>NUCLEOTIDE SEQUENCE [LARGE SCALE MRNA]</scope>
    <source>
        <strain>cv. Columbia</strain>
    </source>
</reference>
<reference key="5">
    <citation type="journal article" date="2009" name="DNA Res.">
        <title>Analysis of multiple occurrences of alternative splicing events in Arabidopsis thaliana using novel sequenced full-length cDNAs.</title>
        <authorList>
            <person name="Iida K."/>
            <person name="Fukami-Kobayashi K."/>
            <person name="Toyoda A."/>
            <person name="Sakaki Y."/>
            <person name="Kobayashi M."/>
            <person name="Seki M."/>
            <person name="Shinozaki K."/>
        </authorList>
    </citation>
    <scope>NUCLEOTIDE SEQUENCE [LARGE SCALE MRNA]</scope>
    <source>
        <strain>cv. Columbia</strain>
    </source>
</reference>
<reference key="6">
    <citation type="journal article" date="2007" name="Mol. Cell. Proteomics">
        <title>Temporal analysis of sucrose-induced phosphorylation changes in plasma membrane proteins of Arabidopsis.</title>
        <authorList>
            <person name="Niittylae T."/>
            <person name="Fuglsang A.T."/>
            <person name="Palmgren M.G."/>
            <person name="Frommer W.B."/>
            <person name="Schulze W.X."/>
        </authorList>
    </citation>
    <scope>PHOSPHORYLATION [LARGE SCALE ANALYSIS] AT SER-207</scope>
    <scope>IDENTIFICATION BY MASS SPECTROMETRY [LARGE SCALE ANALYSIS]</scope>
    <source>
        <tissue>Seedling</tissue>
    </source>
</reference>
<reference key="7">
    <citation type="journal article" date="2008" name="J. Proteome Res.">
        <title>Site-specific phosphorylation profiling of Arabidopsis proteins by mass spectrometry and peptide chip analysis.</title>
        <authorList>
            <person name="de la Fuente van Bentem S."/>
            <person name="Anrather D."/>
            <person name="Dohnal I."/>
            <person name="Roitinger E."/>
            <person name="Csaszar E."/>
            <person name="Joore J."/>
            <person name="Buijnink J."/>
            <person name="Carreri A."/>
            <person name="Forzani C."/>
            <person name="Lorkovic Z.J."/>
            <person name="Barta A."/>
            <person name="Lecourieux D."/>
            <person name="Verhounig A."/>
            <person name="Jonak C."/>
            <person name="Hirt H."/>
        </authorList>
    </citation>
    <scope>PHOSPHORYLATION [LARGE SCALE ANALYSIS] AT SER-207</scope>
    <scope>IDENTIFICATION BY MASS SPECTROMETRY [LARGE SCALE ANALYSIS]</scope>
    <source>
        <tissue>Root</tissue>
    </source>
</reference>
<reference key="8">
    <citation type="journal article" date="2009" name="J. Proteomics">
        <title>Phosphoproteomic analysis of nuclei-enriched fractions from Arabidopsis thaliana.</title>
        <authorList>
            <person name="Jones A.M.E."/>
            <person name="MacLean D."/>
            <person name="Studholme D.J."/>
            <person name="Serna-Sanz A."/>
            <person name="Andreasson E."/>
            <person name="Rathjen J.P."/>
            <person name="Peck S.C."/>
        </authorList>
    </citation>
    <scope>PHOSPHORYLATION [LARGE SCALE ANALYSIS] AT SER-207</scope>
    <scope>IDENTIFICATION BY MASS SPECTROMETRY [LARGE SCALE ANALYSIS]</scope>
    <source>
        <strain>cv. Columbia</strain>
    </source>
</reference>
<reference key="9">
    <citation type="journal article" date="2009" name="Plant Physiol.">
        <title>Large-scale Arabidopsis phosphoproteome profiling reveals novel chloroplast kinase substrates and phosphorylation networks.</title>
        <authorList>
            <person name="Reiland S."/>
            <person name="Messerli G."/>
            <person name="Baerenfaller K."/>
            <person name="Gerrits B."/>
            <person name="Endler A."/>
            <person name="Grossmann J."/>
            <person name="Gruissem W."/>
            <person name="Baginsky S."/>
        </authorList>
    </citation>
    <scope>PHOSPHORYLATION [LARGE SCALE ANALYSIS] AT SER-207</scope>
    <scope>IDENTIFICATION BY MASS SPECTROMETRY [LARGE SCALE ANALYSIS]</scope>
</reference>
<sequence length="635" mass="70555">MALSMRKAIGVVKDQTSIGIAKVASNMAPDLEVAIVKATSHDDDQSSDKYIREILSLTSLSRGYVHACVTSVSRRLKKTRDWIVALKALMLVHRLLNEGDPLFQEEILYATRRGTRILNMSDFRDEAHSSSWDHSAFVRTYASYLDQRLELALFERRGRNGGGSSSSHQSNGDDGYNRSRDDFRSPPPRTYDYETGNGFGMPKRSRSFGDVNEIGAREEKKSVTPLREMTPERIFGKMGHLQRLLDRFLSCRPTGLAKNSRMILIAMYPVVKESFRLYADICEVLAVLLDKFFDMEYTDCVKAFDAYASAAKQIDELIAFYHWCKDTGVARSSEYPEVQRITSKLLETLEEFVRDRAKRAKSPERKEIEAPPAPAPPVEEPVDMNEIKALPPPENHTPPPPPAPEPKPQQPQVTDDLVNLREDDVSGDDQGNKFALALFAGPPANNGKWEAFSSDNNVTSAWQNPAAELGKADWELALVETASNLEHQKAAMGGGLDPLLLNGMYDQGAVRQHVSTSELTGGSSSSVALPLPGKVNSHILALPAPDGTVQKVNQDPFAASLTIPPPSYVQMAEMDKKQYLLTQEQQLWQQYQQEGMRGQASLAKMNTAQTAMPYGMPPVNGMGPSPMGYYYNNPY</sequence>
<evidence type="ECO:0000250" key="1"/>
<evidence type="ECO:0000250" key="2">
    <source>
        <dbReference type="UniProtKB" id="Q8LF20"/>
    </source>
</evidence>
<evidence type="ECO:0000255" key="3">
    <source>
        <dbReference type="PROSITE-ProRule" id="PRU00243"/>
    </source>
</evidence>
<evidence type="ECO:0000256" key="4">
    <source>
        <dbReference type="SAM" id="MobiDB-lite"/>
    </source>
</evidence>
<evidence type="ECO:0000305" key="5"/>
<evidence type="ECO:0007744" key="6">
    <source>
    </source>
</evidence>
<evidence type="ECO:0007744" key="7">
    <source>
    </source>
</evidence>
<evidence type="ECO:0007744" key="8">
    <source>
    </source>
</evidence>
<evidence type="ECO:0007744" key="9">
    <source>
    </source>
</evidence>